<feature type="signal peptide" evidence="1">
    <location>
        <begin position="1"/>
        <end position="29"/>
    </location>
</feature>
<feature type="chain" id="PRO_0000379587" description="Uncharacterized PPE family protein PPE16">
    <location>
        <begin position="30"/>
        <end position="618"/>
    </location>
</feature>
<feature type="region of interest" description="Disordered" evidence="2">
    <location>
        <begin position="598"/>
        <end position="618"/>
    </location>
</feature>
<evidence type="ECO:0000255" key="1"/>
<evidence type="ECO:0000256" key="2">
    <source>
        <dbReference type="SAM" id="MobiDB-lite"/>
    </source>
</evidence>
<evidence type="ECO:0000305" key="3"/>
<dbReference type="EMBL" id="AL123456">
    <property type="protein sequence ID" value="CCP43889.1"/>
    <property type="molecule type" value="Genomic_DNA"/>
</dbReference>
<dbReference type="PIR" id="H70552">
    <property type="entry name" value="H70552"/>
</dbReference>
<dbReference type="RefSeq" id="WP_003405919.1">
    <property type="nucleotide sequence ID" value="NZ_NVQJ01000021.1"/>
</dbReference>
<dbReference type="RefSeq" id="YP_177790.1">
    <property type="nucleotide sequence ID" value="NC_000962.3"/>
</dbReference>
<dbReference type="SMR" id="P9WI29"/>
<dbReference type="STRING" id="83332.Rv1135c"/>
<dbReference type="PaxDb" id="83332-Rv1135c"/>
<dbReference type="DNASU" id="885131"/>
<dbReference type="GeneID" id="885131"/>
<dbReference type="KEGG" id="mtu:Rv1135c"/>
<dbReference type="KEGG" id="mtv:RVBD_1135c"/>
<dbReference type="TubercuList" id="Rv1135c"/>
<dbReference type="eggNOG" id="COG5263">
    <property type="taxonomic scope" value="Bacteria"/>
</dbReference>
<dbReference type="eggNOG" id="COG5651">
    <property type="taxonomic scope" value="Bacteria"/>
</dbReference>
<dbReference type="InParanoid" id="P9WI29"/>
<dbReference type="OrthoDB" id="4730360at2"/>
<dbReference type="PhylomeDB" id="P9WI29"/>
<dbReference type="Proteomes" id="UP000001584">
    <property type="component" value="Chromosome"/>
</dbReference>
<dbReference type="GO" id="GO:0052572">
    <property type="term" value="P:response to host immune response"/>
    <property type="evidence" value="ECO:0000318"/>
    <property type="project" value="GO_Central"/>
</dbReference>
<dbReference type="FunFam" id="1.20.1260.20:FF:000001">
    <property type="entry name" value="PPE family protein PPE41"/>
    <property type="match status" value="1"/>
</dbReference>
<dbReference type="Gene3D" id="1.20.1260.20">
    <property type="entry name" value="PPE superfamily"/>
    <property type="match status" value="1"/>
</dbReference>
<dbReference type="InterPro" id="IPR002989">
    <property type="entry name" value="Mycobac_pentapep"/>
</dbReference>
<dbReference type="InterPro" id="IPR000030">
    <property type="entry name" value="PPE_dom"/>
</dbReference>
<dbReference type="InterPro" id="IPR038332">
    <property type="entry name" value="PPE_sf"/>
</dbReference>
<dbReference type="PANTHER" id="PTHR46766">
    <property type="entry name" value="GLUTAMINE-RICH PROTEIN 2"/>
    <property type="match status" value="1"/>
</dbReference>
<dbReference type="PANTHER" id="PTHR46766:SF1">
    <property type="entry name" value="GLUTAMINE-RICH PROTEIN 2"/>
    <property type="match status" value="1"/>
</dbReference>
<dbReference type="Pfam" id="PF01469">
    <property type="entry name" value="Pentapeptide_2"/>
    <property type="match status" value="6"/>
</dbReference>
<dbReference type="Pfam" id="PF00823">
    <property type="entry name" value="PPE"/>
    <property type="match status" value="1"/>
</dbReference>
<dbReference type="SUPFAM" id="SSF140459">
    <property type="entry name" value="PE/PPE dimer-like"/>
    <property type="match status" value="1"/>
</dbReference>
<reference key="1">
    <citation type="journal article" date="1998" name="Nature">
        <title>Deciphering the biology of Mycobacterium tuberculosis from the complete genome sequence.</title>
        <authorList>
            <person name="Cole S.T."/>
            <person name="Brosch R."/>
            <person name="Parkhill J."/>
            <person name="Garnier T."/>
            <person name="Churcher C.M."/>
            <person name="Harris D.E."/>
            <person name="Gordon S.V."/>
            <person name="Eiglmeier K."/>
            <person name="Gas S."/>
            <person name="Barry C.E. III"/>
            <person name="Tekaia F."/>
            <person name="Badcock K."/>
            <person name="Basham D."/>
            <person name="Brown D."/>
            <person name="Chillingworth T."/>
            <person name="Connor R."/>
            <person name="Davies R.M."/>
            <person name="Devlin K."/>
            <person name="Feltwell T."/>
            <person name="Gentles S."/>
            <person name="Hamlin N."/>
            <person name="Holroyd S."/>
            <person name="Hornsby T."/>
            <person name="Jagels K."/>
            <person name="Krogh A."/>
            <person name="McLean J."/>
            <person name="Moule S."/>
            <person name="Murphy L.D."/>
            <person name="Oliver S."/>
            <person name="Osborne J."/>
            <person name="Quail M.A."/>
            <person name="Rajandream M.A."/>
            <person name="Rogers J."/>
            <person name="Rutter S."/>
            <person name="Seeger K."/>
            <person name="Skelton S."/>
            <person name="Squares S."/>
            <person name="Squares R."/>
            <person name="Sulston J.E."/>
            <person name="Taylor K."/>
            <person name="Whitehead S."/>
            <person name="Barrell B.G."/>
        </authorList>
    </citation>
    <scope>NUCLEOTIDE SEQUENCE [LARGE SCALE GENOMIC DNA]</scope>
    <source>
        <strain>ATCC 25618 / H37Rv</strain>
    </source>
</reference>
<name>PPE16_MYCTU</name>
<keyword id="KW-1185">Reference proteome</keyword>
<keyword id="KW-0732">Signal</keyword>
<gene>
    <name type="primary">PPE16</name>
    <name type="ordered locus">Rv1135c</name>
</gene>
<proteinExistence type="inferred from homology"/>
<comment type="similarity">
    <text evidence="3">Belongs to the mycobacterial PPE family.</text>
</comment>
<organism>
    <name type="scientific">Mycobacterium tuberculosis (strain ATCC 25618 / H37Rv)</name>
    <dbReference type="NCBI Taxonomy" id="83332"/>
    <lineage>
        <taxon>Bacteria</taxon>
        <taxon>Bacillati</taxon>
        <taxon>Actinomycetota</taxon>
        <taxon>Actinomycetes</taxon>
        <taxon>Mycobacteriales</taxon>
        <taxon>Mycobacteriaceae</taxon>
        <taxon>Mycobacterium</taxon>
        <taxon>Mycobacterium tuberculosis complex</taxon>
    </lineage>
</organism>
<sequence>MSFLVLPPEVNSALMFAGAGSGPTLAAAAAWDGLAAELGQAANSFSSATAALADTAWQGPAATAMAAAAAPYASWLSTAATRALSAAAQAKAAAAVYEAARAATVDPLLVAANRHQLVSLVLSNLFGQNAPAIAATEAAYEQLWAADVAAMVSYHSGASAVAAQLAPWAQAVRALPNPTAPALASGPAALAIPALGIGNTGIGNIFSIGNIGDYNLGNGNTGNANLGSGNTGQANLGSGNTGFFNFGSGNTANTNFGSGNLGNLNLGSGNDGNGNFGLGNIGDGNRGSGNVGSFNFGTANAGSFNVGSANHGSPNVGFANLGNNNLGIANLGNNNLGIANLGNNNIGIGLTGDNMIGIGALNSGIGNLGFGNSGNNNIGLFNSGNNNIGFFNSGDSNFGFFNSGDTNTGFGNAGFTNTGFGNAGSGNFGFGNAGNNNFGFGNSGFENMGVGNSGAYNTGSFNSGTLNTGDLNSGDFNTGWANSGDINTGGFHSGDLNTGFGSPVDQPVMNSGFGNIGTGNSGFNNSGDANSGFQNTNTGAFFIGHSGLLNSGGGQHVGISNSGTGFNTGLFNTGFNNTGIGNSATNAAFTTTSGVANSGDNSSGGFNAGNDQSGFFDG</sequence>
<protein>
    <recommendedName>
        <fullName>Uncharacterized PPE family protein PPE16</fullName>
    </recommendedName>
</protein>
<accession>P9WI29</accession>
<accession>L0T7E9</accession>
<accession>Q79FS0</accession>
<accession>Q8VK65</accession>